<protein>
    <recommendedName>
        <fullName evidence="1">Glucose-6-phosphate isomerase</fullName>
        <shortName evidence="1">GPI</shortName>
        <ecNumber evidence="1">5.3.1.9</ecNumber>
    </recommendedName>
    <alternativeName>
        <fullName evidence="1">Phosphoglucose isomerase</fullName>
        <shortName evidence="1">PGI</shortName>
    </alternativeName>
    <alternativeName>
        <fullName evidence="1">Phosphohexose isomerase</fullName>
        <shortName evidence="1">PHI</shortName>
    </alternativeName>
</protein>
<comment type="function">
    <text evidence="1">Catalyzes the reversible isomerization of glucose-6-phosphate to fructose-6-phosphate.</text>
</comment>
<comment type="catalytic activity">
    <reaction evidence="1">
        <text>alpha-D-glucose 6-phosphate = beta-D-fructose 6-phosphate</text>
        <dbReference type="Rhea" id="RHEA:11816"/>
        <dbReference type="ChEBI" id="CHEBI:57634"/>
        <dbReference type="ChEBI" id="CHEBI:58225"/>
        <dbReference type="EC" id="5.3.1.9"/>
    </reaction>
</comment>
<comment type="pathway">
    <text evidence="1">Carbohydrate biosynthesis; gluconeogenesis.</text>
</comment>
<comment type="pathway">
    <text evidence="1">Carbohydrate degradation; glycolysis; D-glyceraldehyde 3-phosphate and glycerone phosphate from D-glucose: step 2/4.</text>
</comment>
<comment type="subcellular location">
    <subcellularLocation>
        <location evidence="1">Cytoplasm</location>
    </subcellularLocation>
</comment>
<comment type="similarity">
    <text evidence="1">Belongs to the GPI family.</text>
</comment>
<evidence type="ECO:0000255" key="1">
    <source>
        <dbReference type="HAMAP-Rule" id="MF_00473"/>
    </source>
</evidence>
<keyword id="KW-0963">Cytoplasm</keyword>
<keyword id="KW-0312">Gluconeogenesis</keyword>
<keyword id="KW-0324">Glycolysis</keyword>
<keyword id="KW-0413">Isomerase</keyword>
<gene>
    <name evidence="1" type="primary">pgi</name>
    <name type="ordered locus">LMOf2365_2338</name>
</gene>
<dbReference type="EC" id="5.3.1.9" evidence="1"/>
<dbReference type="EMBL" id="AE017262">
    <property type="protein sequence ID" value="AAT05104.1"/>
    <property type="molecule type" value="Genomic_DNA"/>
</dbReference>
<dbReference type="RefSeq" id="WP_003728418.1">
    <property type="nucleotide sequence ID" value="NC_002973.6"/>
</dbReference>
<dbReference type="SMR" id="Q71X61"/>
<dbReference type="KEGG" id="lmf:LMOf2365_2338"/>
<dbReference type="HOGENOM" id="CLU_037303_0_1_9"/>
<dbReference type="UniPathway" id="UPA00109">
    <property type="reaction ID" value="UER00181"/>
</dbReference>
<dbReference type="UniPathway" id="UPA00138"/>
<dbReference type="GO" id="GO:0005829">
    <property type="term" value="C:cytosol"/>
    <property type="evidence" value="ECO:0007669"/>
    <property type="project" value="TreeGrafter"/>
</dbReference>
<dbReference type="GO" id="GO:0097367">
    <property type="term" value="F:carbohydrate derivative binding"/>
    <property type="evidence" value="ECO:0007669"/>
    <property type="project" value="InterPro"/>
</dbReference>
<dbReference type="GO" id="GO:0004347">
    <property type="term" value="F:glucose-6-phosphate isomerase activity"/>
    <property type="evidence" value="ECO:0007669"/>
    <property type="project" value="UniProtKB-UniRule"/>
</dbReference>
<dbReference type="GO" id="GO:0048029">
    <property type="term" value="F:monosaccharide binding"/>
    <property type="evidence" value="ECO:0007669"/>
    <property type="project" value="TreeGrafter"/>
</dbReference>
<dbReference type="GO" id="GO:0006094">
    <property type="term" value="P:gluconeogenesis"/>
    <property type="evidence" value="ECO:0007669"/>
    <property type="project" value="UniProtKB-UniRule"/>
</dbReference>
<dbReference type="GO" id="GO:0051156">
    <property type="term" value="P:glucose 6-phosphate metabolic process"/>
    <property type="evidence" value="ECO:0007669"/>
    <property type="project" value="TreeGrafter"/>
</dbReference>
<dbReference type="GO" id="GO:0006096">
    <property type="term" value="P:glycolytic process"/>
    <property type="evidence" value="ECO:0007669"/>
    <property type="project" value="UniProtKB-UniRule"/>
</dbReference>
<dbReference type="CDD" id="cd05015">
    <property type="entry name" value="SIS_PGI_1"/>
    <property type="match status" value="1"/>
</dbReference>
<dbReference type="CDD" id="cd05016">
    <property type="entry name" value="SIS_PGI_2"/>
    <property type="match status" value="1"/>
</dbReference>
<dbReference type="FunFam" id="3.40.50.10490:FF:000015">
    <property type="entry name" value="Glucose-6-phosphate isomerase"/>
    <property type="match status" value="1"/>
</dbReference>
<dbReference type="FunFam" id="3.40.50.10490:FF:000016">
    <property type="entry name" value="Glucose-6-phosphate isomerase"/>
    <property type="match status" value="1"/>
</dbReference>
<dbReference type="Gene3D" id="3.40.50.10490">
    <property type="entry name" value="Glucose-6-phosphate isomerase like protein, domain 1"/>
    <property type="match status" value="3"/>
</dbReference>
<dbReference type="HAMAP" id="MF_00473">
    <property type="entry name" value="G6P_isomerase"/>
    <property type="match status" value="1"/>
</dbReference>
<dbReference type="InterPro" id="IPR001672">
    <property type="entry name" value="G6P_Isomerase"/>
</dbReference>
<dbReference type="InterPro" id="IPR018189">
    <property type="entry name" value="Phosphoglucose_isomerase_CS"/>
</dbReference>
<dbReference type="InterPro" id="IPR046348">
    <property type="entry name" value="SIS_dom_sf"/>
</dbReference>
<dbReference type="InterPro" id="IPR035476">
    <property type="entry name" value="SIS_PGI_1"/>
</dbReference>
<dbReference type="InterPro" id="IPR035482">
    <property type="entry name" value="SIS_PGI_2"/>
</dbReference>
<dbReference type="NCBIfam" id="NF010697">
    <property type="entry name" value="PRK14097.1"/>
    <property type="match status" value="1"/>
</dbReference>
<dbReference type="PANTHER" id="PTHR11469">
    <property type="entry name" value="GLUCOSE-6-PHOSPHATE ISOMERASE"/>
    <property type="match status" value="1"/>
</dbReference>
<dbReference type="PANTHER" id="PTHR11469:SF1">
    <property type="entry name" value="GLUCOSE-6-PHOSPHATE ISOMERASE"/>
    <property type="match status" value="1"/>
</dbReference>
<dbReference type="Pfam" id="PF00342">
    <property type="entry name" value="PGI"/>
    <property type="match status" value="1"/>
</dbReference>
<dbReference type="PRINTS" id="PR00662">
    <property type="entry name" value="G6PISOMERASE"/>
</dbReference>
<dbReference type="SUPFAM" id="SSF53697">
    <property type="entry name" value="SIS domain"/>
    <property type="match status" value="1"/>
</dbReference>
<dbReference type="PROSITE" id="PS00765">
    <property type="entry name" value="P_GLUCOSE_ISOMERASE_1"/>
    <property type="match status" value="1"/>
</dbReference>
<dbReference type="PROSITE" id="PS00174">
    <property type="entry name" value="P_GLUCOSE_ISOMERASE_2"/>
    <property type="match status" value="1"/>
</dbReference>
<dbReference type="PROSITE" id="PS51463">
    <property type="entry name" value="P_GLUCOSE_ISOMERASE_3"/>
    <property type="match status" value="1"/>
</dbReference>
<feature type="chain" id="PRO_0000180669" description="Glucose-6-phosphate isomerase">
    <location>
        <begin position="1"/>
        <end position="450"/>
    </location>
</feature>
<feature type="active site" description="Proton donor" evidence="1">
    <location>
        <position position="290"/>
    </location>
</feature>
<feature type="active site" evidence="1">
    <location>
        <position position="311"/>
    </location>
</feature>
<feature type="active site" evidence="1">
    <location>
        <position position="425"/>
    </location>
</feature>
<reference key="1">
    <citation type="journal article" date="2004" name="Nucleic Acids Res.">
        <title>Whole genome comparisons of serotype 4b and 1/2a strains of the food-borne pathogen Listeria monocytogenes reveal new insights into the core genome components of this species.</title>
        <authorList>
            <person name="Nelson K.E."/>
            <person name="Fouts D.E."/>
            <person name="Mongodin E.F."/>
            <person name="Ravel J."/>
            <person name="DeBoy R.T."/>
            <person name="Kolonay J.F."/>
            <person name="Rasko D.A."/>
            <person name="Angiuoli S.V."/>
            <person name="Gill S.R."/>
            <person name="Paulsen I.T."/>
            <person name="Peterson J.D."/>
            <person name="White O."/>
            <person name="Nelson W.C."/>
            <person name="Nierman W.C."/>
            <person name="Beanan M.J."/>
            <person name="Brinkac L.M."/>
            <person name="Daugherty S.C."/>
            <person name="Dodson R.J."/>
            <person name="Durkin A.S."/>
            <person name="Madupu R."/>
            <person name="Haft D.H."/>
            <person name="Selengut J."/>
            <person name="Van Aken S.E."/>
            <person name="Khouri H.M."/>
            <person name="Fedorova N."/>
            <person name="Forberger H.A."/>
            <person name="Tran B."/>
            <person name="Kathariou S."/>
            <person name="Wonderling L.D."/>
            <person name="Uhlich G.A."/>
            <person name="Bayles D.O."/>
            <person name="Luchansky J.B."/>
            <person name="Fraser C.M."/>
        </authorList>
    </citation>
    <scope>NUCLEOTIDE SEQUENCE [LARGE SCALE GENOMIC DNA]</scope>
    <source>
        <strain>F2365</strain>
    </source>
</reference>
<name>G6PI_LISMF</name>
<proteinExistence type="inferred from homology"/>
<organism>
    <name type="scientific">Listeria monocytogenes serotype 4b (strain F2365)</name>
    <dbReference type="NCBI Taxonomy" id="265669"/>
    <lineage>
        <taxon>Bacteria</taxon>
        <taxon>Bacillati</taxon>
        <taxon>Bacillota</taxon>
        <taxon>Bacilli</taxon>
        <taxon>Bacillales</taxon>
        <taxon>Listeriaceae</taxon>
        <taxon>Listeria</taxon>
    </lineage>
</organism>
<sequence>MTHIKFDYSKALRFFEERELDYLEPAVKAAHDSLHNGTGAGNDALGWINLPTDYDKEEFARIKKATEKIHSDSDVLIVIGIGGSYLGARAAIETLNHSFYNVLEKGARKTPQVFFAGNSISSSYLHDLIEVVGDRDFSVNVISKSGTTTEPAIAFRVFKELLIKKYGEEGAKKRIYATTDKAKGALKTLADNEGYETFVVPDDVGGRFSVLTAVGLLPIAVSGVDIDALMNGAAAASKDFDKPELKNNIAYQYAAARNVLYRKGKVTELLISYEPGLQYFNEWWKQLFGESEGKDKKGIYPSSANFSTDLHSIGQYIQDGRRNLFETVIKVDKPRHNLTINKEEVDLDGLNYLAGETVDFVNTKAFEGTLLAHTDGEVPNFVVEVPELDAYTFGYLVYFFEKAVAISGYLNGVNPFDQPGVEAYKANMFALLGKPGFEDKKAELEKRLND</sequence>
<accession>Q71X61</accession>